<accession>B0BSW0</accession>
<organism>
    <name type="scientific">Actinobacillus pleuropneumoniae serotype 3 (strain JL03)</name>
    <dbReference type="NCBI Taxonomy" id="434271"/>
    <lineage>
        <taxon>Bacteria</taxon>
        <taxon>Pseudomonadati</taxon>
        <taxon>Pseudomonadota</taxon>
        <taxon>Gammaproteobacteria</taxon>
        <taxon>Pasteurellales</taxon>
        <taxon>Pasteurellaceae</taxon>
        <taxon>Actinobacillus</taxon>
    </lineage>
</organism>
<keyword id="KW-0963">Cytoplasm</keyword>
<keyword id="KW-0489">Methyltransferase</keyword>
<keyword id="KW-0949">S-adenosyl-L-methionine</keyword>
<keyword id="KW-0808">Transferase</keyword>
<keyword id="KW-0819">tRNA processing</keyword>
<protein>
    <recommendedName>
        <fullName evidence="1">tRNA (guanine-N(1)-)-methyltransferase</fullName>
        <ecNumber evidence="1">2.1.1.228</ecNumber>
    </recommendedName>
    <alternativeName>
        <fullName evidence="1">M1G-methyltransferase</fullName>
    </alternativeName>
    <alternativeName>
        <fullName evidence="1">tRNA [GM37] methyltransferase</fullName>
    </alternativeName>
</protein>
<feature type="chain" id="PRO_1000130125" description="tRNA (guanine-N(1)-)-methyltransferase">
    <location>
        <begin position="1"/>
        <end position="251"/>
    </location>
</feature>
<feature type="binding site" evidence="1">
    <location>
        <position position="117"/>
    </location>
    <ligand>
        <name>S-adenosyl-L-methionine</name>
        <dbReference type="ChEBI" id="CHEBI:59789"/>
    </ligand>
</feature>
<feature type="binding site" evidence="1">
    <location>
        <begin position="137"/>
        <end position="142"/>
    </location>
    <ligand>
        <name>S-adenosyl-L-methionine</name>
        <dbReference type="ChEBI" id="CHEBI:59789"/>
    </ligand>
</feature>
<name>TRMD_ACTPJ</name>
<gene>
    <name evidence="1" type="primary">trmD</name>
    <name type="ordered locus">APJL_1824</name>
</gene>
<proteinExistence type="inferred from homology"/>
<dbReference type="EC" id="2.1.1.228" evidence="1"/>
<dbReference type="EMBL" id="CP000687">
    <property type="protein sequence ID" value="ABY70374.1"/>
    <property type="molecule type" value="Genomic_DNA"/>
</dbReference>
<dbReference type="RefSeq" id="WP_005599344.1">
    <property type="nucleotide sequence ID" value="NC_010278.1"/>
</dbReference>
<dbReference type="SMR" id="B0BSW0"/>
<dbReference type="GeneID" id="92743626"/>
<dbReference type="KEGG" id="apj:APJL_1824"/>
<dbReference type="HOGENOM" id="CLU_047363_0_1_6"/>
<dbReference type="Proteomes" id="UP000008547">
    <property type="component" value="Chromosome"/>
</dbReference>
<dbReference type="GO" id="GO:0005829">
    <property type="term" value="C:cytosol"/>
    <property type="evidence" value="ECO:0007669"/>
    <property type="project" value="TreeGrafter"/>
</dbReference>
<dbReference type="GO" id="GO:0052906">
    <property type="term" value="F:tRNA (guanine(37)-N1)-methyltransferase activity"/>
    <property type="evidence" value="ECO:0007669"/>
    <property type="project" value="UniProtKB-UniRule"/>
</dbReference>
<dbReference type="GO" id="GO:0002939">
    <property type="term" value="P:tRNA N1-guanine methylation"/>
    <property type="evidence" value="ECO:0007669"/>
    <property type="project" value="TreeGrafter"/>
</dbReference>
<dbReference type="CDD" id="cd18080">
    <property type="entry name" value="TrmD-like"/>
    <property type="match status" value="1"/>
</dbReference>
<dbReference type="FunFam" id="1.10.1270.20:FF:000001">
    <property type="entry name" value="tRNA (guanine-N(1)-)-methyltransferase"/>
    <property type="match status" value="1"/>
</dbReference>
<dbReference type="FunFam" id="3.40.1280.10:FF:000001">
    <property type="entry name" value="tRNA (guanine-N(1)-)-methyltransferase"/>
    <property type="match status" value="1"/>
</dbReference>
<dbReference type="Gene3D" id="3.40.1280.10">
    <property type="match status" value="1"/>
</dbReference>
<dbReference type="Gene3D" id="1.10.1270.20">
    <property type="entry name" value="tRNA(m1g37)methyltransferase, domain 2"/>
    <property type="match status" value="1"/>
</dbReference>
<dbReference type="HAMAP" id="MF_00605">
    <property type="entry name" value="TrmD"/>
    <property type="match status" value="1"/>
</dbReference>
<dbReference type="InterPro" id="IPR029028">
    <property type="entry name" value="Alpha/beta_knot_MTases"/>
</dbReference>
<dbReference type="InterPro" id="IPR023148">
    <property type="entry name" value="tRNA_m1G_MeTrfase_C_sf"/>
</dbReference>
<dbReference type="InterPro" id="IPR002649">
    <property type="entry name" value="tRNA_m1G_MeTrfase_TrmD"/>
</dbReference>
<dbReference type="InterPro" id="IPR029026">
    <property type="entry name" value="tRNA_m1G_MTases_N"/>
</dbReference>
<dbReference type="InterPro" id="IPR016009">
    <property type="entry name" value="tRNA_MeTrfase_TRMD/TRM10"/>
</dbReference>
<dbReference type="NCBIfam" id="NF000648">
    <property type="entry name" value="PRK00026.1"/>
    <property type="match status" value="1"/>
</dbReference>
<dbReference type="NCBIfam" id="TIGR00088">
    <property type="entry name" value="trmD"/>
    <property type="match status" value="1"/>
</dbReference>
<dbReference type="PANTHER" id="PTHR46417">
    <property type="entry name" value="TRNA (GUANINE-N(1)-)-METHYLTRANSFERASE"/>
    <property type="match status" value="1"/>
</dbReference>
<dbReference type="PANTHER" id="PTHR46417:SF1">
    <property type="entry name" value="TRNA (GUANINE-N(1)-)-METHYLTRANSFERASE"/>
    <property type="match status" value="1"/>
</dbReference>
<dbReference type="Pfam" id="PF01746">
    <property type="entry name" value="tRNA_m1G_MT"/>
    <property type="match status" value="1"/>
</dbReference>
<dbReference type="PIRSF" id="PIRSF000386">
    <property type="entry name" value="tRNA_mtase"/>
    <property type="match status" value="1"/>
</dbReference>
<dbReference type="SUPFAM" id="SSF75217">
    <property type="entry name" value="alpha/beta knot"/>
    <property type="match status" value="1"/>
</dbReference>
<evidence type="ECO:0000255" key="1">
    <source>
        <dbReference type="HAMAP-Rule" id="MF_00605"/>
    </source>
</evidence>
<reference key="1">
    <citation type="journal article" date="2008" name="PLoS ONE">
        <title>Genome biology of Actinobacillus pleuropneumoniae JL03, an isolate of serotype 3 prevalent in China.</title>
        <authorList>
            <person name="Xu Z."/>
            <person name="Zhou Y."/>
            <person name="Li L."/>
            <person name="Zhou R."/>
            <person name="Xiao S."/>
            <person name="Wan Y."/>
            <person name="Zhang S."/>
            <person name="Wang K."/>
            <person name="Li W."/>
            <person name="Li L."/>
            <person name="Jin H."/>
            <person name="Kang M."/>
            <person name="Dalai B."/>
            <person name="Li T."/>
            <person name="Liu L."/>
            <person name="Cheng Y."/>
            <person name="Zhang L."/>
            <person name="Xu T."/>
            <person name="Zheng H."/>
            <person name="Pu S."/>
            <person name="Wang B."/>
            <person name="Gu W."/>
            <person name="Zhang X.L."/>
            <person name="Zhu G.-F."/>
            <person name="Wang S."/>
            <person name="Zhao G.-P."/>
            <person name="Chen H."/>
        </authorList>
    </citation>
    <scope>NUCLEOTIDE SEQUENCE [LARGE SCALE GENOMIC DNA]</scope>
    <source>
        <strain>JL03</strain>
    </source>
</reference>
<comment type="function">
    <text evidence="1">Specifically methylates guanosine-37 in various tRNAs.</text>
</comment>
<comment type="catalytic activity">
    <reaction evidence="1">
        <text>guanosine(37) in tRNA + S-adenosyl-L-methionine = N(1)-methylguanosine(37) in tRNA + S-adenosyl-L-homocysteine + H(+)</text>
        <dbReference type="Rhea" id="RHEA:36899"/>
        <dbReference type="Rhea" id="RHEA-COMP:10145"/>
        <dbReference type="Rhea" id="RHEA-COMP:10147"/>
        <dbReference type="ChEBI" id="CHEBI:15378"/>
        <dbReference type="ChEBI" id="CHEBI:57856"/>
        <dbReference type="ChEBI" id="CHEBI:59789"/>
        <dbReference type="ChEBI" id="CHEBI:73542"/>
        <dbReference type="ChEBI" id="CHEBI:74269"/>
        <dbReference type="EC" id="2.1.1.228"/>
    </reaction>
</comment>
<comment type="subunit">
    <text evidence="1">Homodimer.</text>
</comment>
<comment type="subcellular location">
    <subcellularLocation>
        <location evidence="1">Cytoplasm</location>
    </subcellularLocation>
</comment>
<comment type="similarity">
    <text evidence="1">Belongs to the RNA methyltransferase TrmD family.</text>
</comment>
<sequence length="251" mass="28221">MWIGIISLFPEMFKAITDFGVTGRAVKQDLLQIQCWNPRDFTFDKHKTVDDRPYGGGPGMLMMVQPLRDAIHAAKQAAKAEDGVEAKVIYLSPQGRKLDQQGVKTLASNQKLILICGRYEGVDERLIQTEVDEEWSIGDYVLTGGELPAMTLIDAVARFVPGVLGKQASADEDSFATGLLDCPHYTRPEMLDGIPVPEVLMSGHHENIRKWRLEQSLERTWLRRPELLDSLALTDEQRVLLAKIKKQHKIS</sequence>